<keyword id="KW-0024">Alternative initiation</keyword>
<keyword id="KW-0106">Calcium</keyword>
<keyword id="KW-0167">Capsid protein</keyword>
<keyword id="KW-1015">Disulfide bond</keyword>
<keyword id="KW-0325">Glycoprotein</keyword>
<keyword id="KW-1038">Host endoplasmic reticulum</keyword>
<keyword id="KW-0945">Host-virus interaction</keyword>
<keyword id="KW-0479">Metal-binding</keyword>
<keyword id="KW-1152">Outer capsid protein</keyword>
<keyword id="KW-0732">Signal</keyword>
<keyword id="KW-1146">T=13 icosahedral capsid protein</keyword>
<keyword id="KW-0946">Virion</keyword>
<organism>
    <name type="scientific">Rotavirus A (isolate RVA/Human/India/116E/1986/G9P8[11])</name>
    <name type="common">RV-A</name>
    <dbReference type="NCBI Taxonomy" id="638299"/>
    <lineage>
        <taxon>Viruses</taxon>
        <taxon>Riboviria</taxon>
        <taxon>Orthornavirae</taxon>
        <taxon>Duplornaviricota</taxon>
        <taxon>Resentoviricetes</taxon>
        <taxon>Reovirales</taxon>
        <taxon>Sedoreoviridae</taxon>
        <taxon>Rotavirus</taxon>
        <taxon>Rotavirus A</taxon>
    </lineage>
</organism>
<accession>Q07156</accession>
<protein>
    <recommendedName>
        <fullName evidence="2">Outer capsid glycoprotein VP7</fullName>
    </recommendedName>
</protein>
<evidence type="ECO:0000255" key="1"/>
<evidence type="ECO:0000255" key="2">
    <source>
        <dbReference type="HAMAP-Rule" id="MF_04131"/>
    </source>
</evidence>
<evidence type="ECO:0000305" key="3"/>
<reference key="1">
    <citation type="journal article" date="1993" name="Virology">
        <title>Characterization of the G serotype and genogroup of New Delhi newborn rotavirus strain 116E.</title>
        <authorList>
            <person name="Das B.K."/>
            <person name="Gentsch J.R."/>
            <person name="Hoshino Y."/>
            <person name="Ishida S."/>
            <person name="Nakagomi O."/>
            <person name="Bhan M.K."/>
            <person name="Kumar R."/>
            <person name="Glass R.I."/>
        </authorList>
    </citation>
    <scope>NUCLEOTIDE SEQUENCE [MRNA]</scope>
</reference>
<proteinExistence type="evidence at transcript level"/>
<organismHost>
    <name type="scientific">Homo sapiens</name>
    <name type="common">Human</name>
    <dbReference type="NCBI Taxonomy" id="9606"/>
</organismHost>
<sequence>MYGIEYTTVLTFLISIILLNYILKSVTSAMDFIIYRFLLIIVVVSPFVKTQNYGINVPITGSMDTAYTNSSQQETFLTSTLCLYYPIEASTQIGDTEWKGTLSQLFLTKGWPTGSVYFKEYTDIASFSIDPQFYCDYNVVLVKYNSTLELDMSELADLILNEWLCNPMDIALYYYQQTNEANKWISMGQSCTIKVCPLNTQTLGIGCTTTNTATFEEVATNEKLVITDVVDGVNHKLDVTTNTCTIRNCRKLGPRENVAKLQVGGSEVLDITADPTTTPQTERMMQINWKKWWQVFYTVVDYINQIVQVMSKRSRSFNSAAFYYRI</sequence>
<comment type="function">
    <text evidence="2">Calcium-binding protein that interacts with rotavirus cell receptors once the initial attachment by VP4 has been achieved. Rotavirus attachment and entry into the host cell probably involves multiple sequential contacts between the outer capsid proteins VP4 and VP7, and the cell receptors. Following entry into the host cell, low intracellular or intravesicular Ca(2+) concentration probably causes the calcium-stabilized VP7 trimers to dissociate from the virion. This step is probably necessary for the membrane-disrupting entry step and the release of VP4, which is locked onto the virion by VP7.</text>
</comment>
<comment type="subunit">
    <text evidence="2">Homotrimer; disulfide-linked. 2 Ca(2+) ions bound at each subunit interface in the trimer hold the trimer together. Interacts with the intermediate capsid protein VP6. Interacts with the outer capsid protein VP5*.</text>
</comment>
<comment type="subcellular location">
    <subcellularLocation>
        <location evidence="2">Virion</location>
    </subcellularLocation>
    <subcellularLocation>
        <location evidence="2">Host endoplasmic reticulum lumen</location>
    </subcellularLocation>
    <text evidence="2">The outer layer contains 780 copies of VP7, grouped as 260 trimers. Immature double-layered particles assembled in the cytoplasm bud across the membrane of the endoplasmic reticulum, acquiring during this process a transient lipid membrane that is modified with the ER resident viral glycoproteins NSP4 and VP7; these enveloped particles also contain VP4. As the particles move towards the interior of the ER cisternae, the transient lipid membrane and the non-structural protein NSP4 are lost, while the virus surface proteins VP4 and VP7 rearrange to form the outermost virus protein layer, yielding mature infectious triple-layered particles.</text>
</comment>
<comment type="alternative products">
    <event type="alternative initiation"/>
    <isoform>
        <id>Q07156-1</id>
        <name>1</name>
        <sequence type="displayed"/>
    </isoform>
    <isoform>
        <id>Q07156-2</id>
        <name>2</name>
        <sequence type="described" ref="VSP_038596"/>
    </isoform>
</comment>
<comment type="PTM">
    <text evidence="2">N-glycosylated.</text>
</comment>
<comment type="PTM">
    <text evidence="2">The N-terminus is blocked possibly by pyroglutamic acid.</text>
</comment>
<comment type="miscellaneous">
    <text evidence="2">Some rotavirus strains are neuraminidase-sensitive and require sialic acid to attach to the cell surface. Some rotavirus strains are integrin-dependent. Some rotavirus strains depend on ganglioside for their entry into the host cell. Hsp70 also seems to be involved in the entry of some strains.</text>
</comment>
<comment type="miscellaneous">
    <text evidence="2">In group A rotaviruses, VP7 defines the G serotype.</text>
</comment>
<comment type="miscellaneous">
    <molecule>Isoform 2</molecule>
    <text evidence="3">Produced by alternative initiation at Met-30 of isoform 1.</text>
</comment>
<comment type="similarity">
    <text evidence="2">Belongs to the rotavirus VP7 family.</text>
</comment>
<name>VP7_ROTHU</name>
<feature type="signal peptide" evidence="2">
    <location>
        <begin position="1"/>
        <end position="50"/>
    </location>
</feature>
<feature type="chain" id="PRO_0000149607" description="Outer capsid glycoprotein VP7" evidence="2">
    <location>
        <begin position="51"/>
        <end position="326"/>
    </location>
</feature>
<feature type="region of interest" description="CNP motif; interaction with ITGAV/ITGB3" evidence="2">
    <location>
        <begin position="165"/>
        <end position="167"/>
    </location>
</feature>
<feature type="region of interest" description="LVD motif; interaction with ITGA4/ITGB1 heterodimer" evidence="2">
    <location>
        <begin position="237"/>
        <end position="239"/>
    </location>
</feature>
<feature type="region of interest" description="GPR motif; interaction with ITGAX/ITGB2" evidence="2">
    <location>
        <begin position="253"/>
        <end position="255"/>
    </location>
</feature>
<feature type="binding site" evidence="2">
    <location>
        <position position="95"/>
    </location>
    <ligand>
        <name>Ca(2+)</name>
        <dbReference type="ChEBI" id="CHEBI:29108"/>
        <label>1</label>
    </ligand>
</feature>
<feature type="binding site" evidence="2">
    <location>
        <position position="177"/>
    </location>
    <ligand>
        <name>Ca(2+)</name>
        <dbReference type="ChEBI" id="CHEBI:29108"/>
        <label>2</label>
    </ligand>
</feature>
<feature type="binding site" evidence="2">
    <location>
        <position position="206"/>
    </location>
    <ligand>
        <name>Ca(2+)</name>
        <dbReference type="ChEBI" id="CHEBI:29108"/>
        <label>1</label>
    </ligand>
</feature>
<feature type="binding site" evidence="2">
    <location>
        <position position="214"/>
    </location>
    <ligand>
        <name>Ca(2+)</name>
        <dbReference type="ChEBI" id="CHEBI:29108"/>
        <label>1</label>
    </ligand>
</feature>
<feature type="binding site" evidence="2">
    <location>
        <position position="216"/>
    </location>
    <ligand>
        <name>Ca(2+)</name>
        <dbReference type="ChEBI" id="CHEBI:29108"/>
        <label>1</label>
    </ligand>
</feature>
<feature type="binding site" evidence="2">
    <location>
        <position position="228"/>
    </location>
    <ligand>
        <name>Ca(2+)</name>
        <dbReference type="ChEBI" id="CHEBI:29108"/>
        <label>2</label>
    </ligand>
</feature>
<feature type="binding site" evidence="2">
    <location>
        <position position="229"/>
    </location>
    <ligand>
        <name>Ca(2+)</name>
        <dbReference type="ChEBI" id="CHEBI:29108"/>
        <label>2</label>
    </ligand>
</feature>
<feature type="binding site" evidence="2">
    <location>
        <position position="231"/>
    </location>
    <ligand>
        <name>Ca(2+)</name>
        <dbReference type="ChEBI" id="CHEBI:29108"/>
        <label>2</label>
    </ligand>
</feature>
<feature type="binding site" evidence="2">
    <location>
        <position position="301"/>
    </location>
    <ligand>
        <name>Ca(2+)</name>
        <dbReference type="ChEBI" id="CHEBI:29108"/>
        <label>2</label>
    </ligand>
</feature>
<feature type="glycosylation site" description="N-linked (GlcNAc...) asparagine; by host" evidence="1">
    <location>
        <position position="69"/>
    </location>
</feature>
<feature type="glycosylation site" description="N-linked (GlcNAc...) asparagine; by host" evidence="1">
    <location>
        <position position="145"/>
    </location>
</feature>
<feature type="disulfide bond" evidence="2">
    <location>
        <begin position="82"/>
        <end position="135"/>
    </location>
</feature>
<feature type="disulfide bond" evidence="2">
    <location>
        <begin position="165"/>
        <end position="249"/>
    </location>
</feature>
<feature type="disulfide bond" evidence="2">
    <location>
        <begin position="191"/>
        <end position="244"/>
    </location>
</feature>
<feature type="disulfide bond" evidence="2">
    <location>
        <begin position="196"/>
        <end position="207"/>
    </location>
</feature>
<feature type="splice variant" id="VSP_038596" description="In isoform 2." evidence="3">
    <location>
        <begin position="1"/>
        <end position="29"/>
    </location>
</feature>
<dbReference type="EMBL" id="L14072">
    <property type="protein sequence ID" value="AAA03613.1"/>
    <property type="molecule type" value="mRNA"/>
</dbReference>
<dbReference type="SMR" id="Q07156"/>
<dbReference type="GO" id="GO:0044166">
    <property type="term" value="C:host cell endoplasmic reticulum lumen"/>
    <property type="evidence" value="ECO:0007669"/>
    <property type="project" value="UniProtKB-SubCell"/>
</dbReference>
<dbReference type="GO" id="GO:0039621">
    <property type="term" value="C:T=13 icosahedral viral capsid"/>
    <property type="evidence" value="ECO:0007669"/>
    <property type="project" value="UniProtKB-UniRule"/>
</dbReference>
<dbReference type="GO" id="GO:0039624">
    <property type="term" value="C:viral outer capsid"/>
    <property type="evidence" value="ECO:0007669"/>
    <property type="project" value="UniProtKB-UniRule"/>
</dbReference>
<dbReference type="GO" id="GO:0046872">
    <property type="term" value="F:metal ion binding"/>
    <property type="evidence" value="ECO:0007669"/>
    <property type="project" value="UniProtKB-KW"/>
</dbReference>
<dbReference type="Gene3D" id="3.40.50.11130">
    <property type="entry name" value="Glycoprotein VP7, domain 1"/>
    <property type="match status" value="1"/>
</dbReference>
<dbReference type="Gene3D" id="2.60.120.800">
    <property type="entry name" value="Rotavirus outer-layer protein VP7, domain 2"/>
    <property type="match status" value="1"/>
</dbReference>
<dbReference type="HAMAP" id="MF_04130">
    <property type="entry name" value="Rota_VP7"/>
    <property type="match status" value="1"/>
</dbReference>
<dbReference type="HAMAP" id="MF_04131">
    <property type="entry name" value="Rota_VP7_A"/>
    <property type="match status" value="1"/>
</dbReference>
<dbReference type="InterPro" id="IPR001963">
    <property type="entry name" value="VP7"/>
</dbReference>
<dbReference type="InterPro" id="IPR042207">
    <property type="entry name" value="VP7_1"/>
</dbReference>
<dbReference type="InterPro" id="IPR042210">
    <property type="entry name" value="VP7_2"/>
</dbReference>
<dbReference type="Pfam" id="PF00434">
    <property type="entry name" value="VP7"/>
    <property type="match status" value="1"/>
</dbReference>